<feature type="chain" id="PRO_1000059048" description="Glycine--tRNA ligase">
    <location>
        <begin position="1"/>
        <end position="451"/>
    </location>
</feature>
<feature type="binding site" evidence="1">
    <location>
        <position position="99"/>
    </location>
    <ligand>
        <name>substrate</name>
    </ligand>
</feature>
<feature type="binding site" evidence="1">
    <location>
        <position position="168"/>
    </location>
    <ligand>
        <name>substrate</name>
    </ligand>
</feature>
<feature type="binding site" evidence="1">
    <location>
        <begin position="200"/>
        <end position="202"/>
    </location>
    <ligand>
        <name>ATP</name>
        <dbReference type="ChEBI" id="CHEBI:30616"/>
    </ligand>
</feature>
<feature type="binding site" evidence="1">
    <location>
        <begin position="210"/>
        <end position="215"/>
    </location>
    <ligand>
        <name>ATP</name>
        <dbReference type="ChEBI" id="CHEBI:30616"/>
    </ligand>
</feature>
<feature type="binding site" evidence="1">
    <location>
        <begin position="215"/>
        <end position="219"/>
    </location>
    <ligand>
        <name>substrate</name>
    </ligand>
</feature>
<feature type="binding site" evidence="1">
    <location>
        <begin position="284"/>
        <end position="285"/>
    </location>
    <ligand>
        <name>ATP</name>
        <dbReference type="ChEBI" id="CHEBI:30616"/>
    </ligand>
</feature>
<feature type="binding site" evidence="1">
    <location>
        <begin position="324"/>
        <end position="328"/>
    </location>
    <ligand>
        <name>substrate</name>
    </ligand>
</feature>
<feature type="binding site" evidence="1">
    <location>
        <begin position="328"/>
        <end position="331"/>
    </location>
    <ligand>
        <name>ATP</name>
        <dbReference type="ChEBI" id="CHEBI:30616"/>
    </ligand>
</feature>
<gene>
    <name evidence="1" type="primary">glyQS</name>
    <name type="ordered locus">MS53_0452</name>
</gene>
<reference key="1">
    <citation type="journal article" date="2005" name="J. Bacteriol.">
        <title>Swine and poultry pathogens: the complete genome sequences of two strains of Mycoplasma hyopneumoniae and a strain of Mycoplasma synoviae.</title>
        <authorList>
            <person name="Vasconcelos A.T.R."/>
            <person name="Ferreira H.B."/>
            <person name="Bizarro C.V."/>
            <person name="Bonatto S.L."/>
            <person name="Carvalho M.O."/>
            <person name="Pinto P.M."/>
            <person name="Almeida D.F."/>
            <person name="Almeida L.G.P."/>
            <person name="Almeida R."/>
            <person name="Alves-Junior L."/>
            <person name="Assuncao E.N."/>
            <person name="Azevedo V.A.C."/>
            <person name="Bogo M.R."/>
            <person name="Brigido M.M."/>
            <person name="Brocchi M."/>
            <person name="Burity H.A."/>
            <person name="Camargo A.A."/>
            <person name="Camargo S.S."/>
            <person name="Carepo M.S."/>
            <person name="Carraro D.M."/>
            <person name="de Mattos Cascardo J.C."/>
            <person name="Castro L.A."/>
            <person name="Cavalcanti G."/>
            <person name="Chemale G."/>
            <person name="Collevatti R.G."/>
            <person name="Cunha C.W."/>
            <person name="Dallagiovanna B."/>
            <person name="Dambros B.P."/>
            <person name="Dellagostin O.A."/>
            <person name="Falcao C."/>
            <person name="Fantinatti-Garboggini F."/>
            <person name="Felipe M.S.S."/>
            <person name="Fiorentin L."/>
            <person name="Franco G.R."/>
            <person name="Freitas N.S.A."/>
            <person name="Frias D."/>
            <person name="Grangeiro T.B."/>
            <person name="Grisard E.C."/>
            <person name="Guimaraes C.T."/>
            <person name="Hungria M."/>
            <person name="Jardim S.N."/>
            <person name="Krieger M.A."/>
            <person name="Laurino J.P."/>
            <person name="Lima L.F.A."/>
            <person name="Lopes M.I."/>
            <person name="Loreto E.L.S."/>
            <person name="Madeira H.M.F."/>
            <person name="Manfio G.P."/>
            <person name="Maranhao A.Q."/>
            <person name="Martinkovics C.T."/>
            <person name="Medeiros S.R.B."/>
            <person name="Moreira M.A.M."/>
            <person name="Neiva M."/>
            <person name="Ramalho-Neto C.E."/>
            <person name="Nicolas M.F."/>
            <person name="Oliveira S.C."/>
            <person name="Paixao R.F.C."/>
            <person name="Pedrosa F.O."/>
            <person name="Pena S.D.J."/>
            <person name="Pereira M."/>
            <person name="Pereira-Ferrari L."/>
            <person name="Piffer I."/>
            <person name="Pinto L.S."/>
            <person name="Potrich D.P."/>
            <person name="Salim A.C.M."/>
            <person name="Santos F.R."/>
            <person name="Schmitt R."/>
            <person name="Schneider M.P.C."/>
            <person name="Schrank A."/>
            <person name="Schrank I.S."/>
            <person name="Schuck A.F."/>
            <person name="Seuanez H.N."/>
            <person name="Silva D.W."/>
            <person name="Silva R."/>
            <person name="Silva S.C."/>
            <person name="Soares C.M.A."/>
            <person name="Souza K.R.L."/>
            <person name="Souza R.C."/>
            <person name="Staats C.C."/>
            <person name="Steffens M.B.R."/>
            <person name="Teixeira S.M.R."/>
            <person name="Urmenyi T.P."/>
            <person name="Vainstein M.H."/>
            <person name="Zuccherato L.W."/>
            <person name="Simpson A.J.G."/>
            <person name="Zaha A."/>
        </authorList>
    </citation>
    <scope>NUCLEOTIDE SEQUENCE [LARGE SCALE GENOMIC DNA]</scope>
    <source>
        <strain>53</strain>
    </source>
</reference>
<accession>Q4A5V9</accession>
<protein>
    <recommendedName>
        <fullName evidence="1">Glycine--tRNA ligase</fullName>
        <ecNumber evidence="1">6.1.1.14</ecNumber>
    </recommendedName>
    <alternativeName>
        <fullName evidence="1">Glycyl-tRNA synthetase</fullName>
        <shortName evidence="1">GlyRS</shortName>
    </alternativeName>
</protein>
<sequence>MNQNKMLELINHLKNAGFVFQGSEIYGGVANTWDYGPLGVLLKDNILNYWKKFFVFSQNNIYMLDSKILLNSKVWEASGHVGNFNDPLIENKINNKRYRADKVIEELFPNENVAKMTHEQMQEFLQKNVTSYDNSKCAWSEIKKFNLMFETFQGVVDDKKKAIYLRPETAQGIFINFKNIQRAMRAKLPFGVAQVGKSFRNEVTPGNFIFRTREFEQMELEFFFDEETPNSYFDELVNKSYDFMLKLGLSKNNLKVRKHDQEELAHYSKATVDLEYNFPFGWGELMGIAHRGNFDLSTHSKFSNEKLEYLDPNTNKKLIPSVIEPSVGLDRLMLAILCEAYSEEKVSESDTRLVLKLDKKLSPYKVAILPLIKKFNPKANEIYSYLIDKNISVTFDESASIGKRYRRQDAIGTYYCLTVDEQSLEDNTVTLRDRDSMQQERINFKDILKFL</sequence>
<keyword id="KW-0030">Aminoacyl-tRNA synthetase</keyword>
<keyword id="KW-0067">ATP-binding</keyword>
<keyword id="KW-0963">Cytoplasm</keyword>
<keyword id="KW-0436">Ligase</keyword>
<keyword id="KW-0547">Nucleotide-binding</keyword>
<keyword id="KW-0648">Protein biosynthesis</keyword>
<keyword id="KW-1185">Reference proteome</keyword>
<proteinExistence type="inferred from homology"/>
<comment type="function">
    <text evidence="1">Catalyzes the attachment of glycine to tRNA(Gly).</text>
</comment>
<comment type="catalytic activity">
    <reaction evidence="1">
        <text>tRNA(Gly) + glycine + ATP = glycyl-tRNA(Gly) + AMP + diphosphate</text>
        <dbReference type="Rhea" id="RHEA:16013"/>
        <dbReference type="Rhea" id="RHEA-COMP:9664"/>
        <dbReference type="Rhea" id="RHEA-COMP:9683"/>
        <dbReference type="ChEBI" id="CHEBI:30616"/>
        <dbReference type="ChEBI" id="CHEBI:33019"/>
        <dbReference type="ChEBI" id="CHEBI:57305"/>
        <dbReference type="ChEBI" id="CHEBI:78442"/>
        <dbReference type="ChEBI" id="CHEBI:78522"/>
        <dbReference type="ChEBI" id="CHEBI:456215"/>
        <dbReference type="EC" id="6.1.1.14"/>
    </reaction>
</comment>
<comment type="subunit">
    <text evidence="1">Homodimer.</text>
</comment>
<comment type="subcellular location">
    <subcellularLocation>
        <location evidence="1">Cytoplasm</location>
    </subcellularLocation>
</comment>
<comment type="similarity">
    <text evidence="1">Belongs to the class-II aminoacyl-tRNA synthetase family.</text>
</comment>
<evidence type="ECO:0000255" key="1">
    <source>
        <dbReference type="HAMAP-Rule" id="MF_00253"/>
    </source>
</evidence>
<dbReference type="EC" id="6.1.1.14" evidence="1"/>
<dbReference type="EMBL" id="AE017245">
    <property type="protein sequence ID" value="AAZ43862.1"/>
    <property type="molecule type" value="Genomic_DNA"/>
</dbReference>
<dbReference type="RefSeq" id="WP_011283593.1">
    <property type="nucleotide sequence ID" value="NC_007294.1"/>
</dbReference>
<dbReference type="SMR" id="Q4A5V9"/>
<dbReference type="STRING" id="262723.MS53_0452"/>
<dbReference type="KEGG" id="msy:MS53_0452"/>
<dbReference type="eggNOG" id="COG0423">
    <property type="taxonomic scope" value="Bacteria"/>
</dbReference>
<dbReference type="HOGENOM" id="CLU_015515_2_1_14"/>
<dbReference type="OrthoDB" id="9760853at2"/>
<dbReference type="Proteomes" id="UP000000549">
    <property type="component" value="Chromosome"/>
</dbReference>
<dbReference type="GO" id="GO:0005737">
    <property type="term" value="C:cytoplasm"/>
    <property type="evidence" value="ECO:0007669"/>
    <property type="project" value="UniProtKB-SubCell"/>
</dbReference>
<dbReference type="GO" id="GO:0005524">
    <property type="term" value="F:ATP binding"/>
    <property type="evidence" value="ECO:0007669"/>
    <property type="project" value="UniProtKB-UniRule"/>
</dbReference>
<dbReference type="GO" id="GO:0004820">
    <property type="term" value="F:glycine-tRNA ligase activity"/>
    <property type="evidence" value="ECO:0000250"/>
    <property type="project" value="UniProtKB"/>
</dbReference>
<dbReference type="GO" id="GO:0046983">
    <property type="term" value="F:protein dimerization activity"/>
    <property type="evidence" value="ECO:0000250"/>
    <property type="project" value="UniProtKB"/>
</dbReference>
<dbReference type="GO" id="GO:0006426">
    <property type="term" value="P:glycyl-tRNA aminoacylation"/>
    <property type="evidence" value="ECO:0007669"/>
    <property type="project" value="UniProtKB-UniRule"/>
</dbReference>
<dbReference type="CDD" id="cd00774">
    <property type="entry name" value="GlyRS-like_core"/>
    <property type="match status" value="1"/>
</dbReference>
<dbReference type="Gene3D" id="3.40.50.800">
    <property type="entry name" value="Anticodon-binding domain"/>
    <property type="match status" value="1"/>
</dbReference>
<dbReference type="Gene3D" id="3.30.930.10">
    <property type="entry name" value="Bira Bifunctional Protein, Domain 2"/>
    <property type="match status" value="1"/>
</dbReference>
<dbReference type="HAMAP" id="MF_00253_B">
    <property type="entry name" value="Gly_tRNA_synth_B"/>
    <property type="match status" value="1"/>
</dbReference>
<dbReference type="InterPro" id="IPR002314">
    <property type="entry name" value="aa-tRNA-synt_IIb"/>
</dbReference>
<dbReference type="InterPro" id="IPR006195">
    <property type="entry name" value="aa-tRNA-synth_II"/>
</dbReference>
<dbReference type="InterPro" id="IPR045864">
    <property type="entry name" value="aa-tRNA-synth_II/BPL/LPL"/>
</dbReference>
<dbReference type="InterPro" id="IPR004154">
    <property type="entry name" value="Anticodon-bd"/>
</dbReference>
<dbReference type="InterPro" id="IPR036621">
    <property type="entry name" value="Anticodon-bd_dom_sf"/>
</dbReference>
<dbReference type="InterPro" id="IPR027031">
    <property type="entry name" value="Gly-tRNA_synthase/POLG2"/>
</dbReference>
<dbReference type="InterPro" id="IPR022961">
    <property type="entry name" value="Gly_tRNA_ligase_bac"/>
</dbReference>
<dbReference type="InterPro" id="IPR033731">
    <property type="entry name" value="GlyRS-like_core"/>
</dbReference>
<dbReference type="InterPro" id="IPR002315">
    <property type="entry name" value="tRNA-synt_gly"/>
</dbReference>
<dbReference type="NCBIfam" id="TIGR00389">
    <property type="entry name" value="glyS_dimeric"/>
    <property type="match status" value="1"/>
</dbReference>
<dbReference type="NCBIfam" id="NF003211">
    <property type="entry name" value="PRK04173.1"/>
    <property type="match status" value="1"/>
</dbReference>
<dbReference type="PANTHER" id="PTHR10745:SF8">
    <property type="entry name" value="DNA POLYMERASE SUBUNIT GAMMA-2, MITOCHONDRIAL"/>
    <property type="match status" value="1"/>
</dbReference>
<dbReference type="PANTHER" id="PTHR10745">
    <property type="entry name" value="GLYCYL-TRNA SYNTHETASE/DNA POLYMERASE SUBUNIT GAMMA-2"/>
    <property type="match status" value="1"/>
</dbReference>
<dbReference type="Pfam" id="PF03129">
    <property type="entry name" value="HGTP_anticodon"/>
    <property type="match status" value="1"/>
</dbReference>
<dbReference type="Pfam" id="PF00587">
    <property type="entry name" value="tRNA-synt_2b"/>
    <property type="match status" value="1"/>
</dbReference>
<dbReference type="PRINTS" id="PR01043">
    <property type="entry name" value="TRNASYNTHGLY"/>
</dbReference>
<dbReference type="SUPFAM" id="SSF52954">
    <property type="entry name" value="Class II aaRS ABD-related"/>
    <property type="match status" value="1"/>
</dbReference>
<dbReference type="SUPFAM" id="SSF55681">
    <property type="entry name" value="Class II aaRS and biotin synthetases"/>
    <property type="match status" value="1"/>
</dbReference>
<dbReference type="PROSITE" id="PS50862">
    <property type="entry name" value="AA_TRNA_LIGASE_II"/>
    <property type="match status" value="1"/>
</dbReference>
<name>SYG_MYCS5</name>
<organism>
    <name type="scientific">Mycoplasmopsis synoviae (strain 53)</name>
    <name type="common">Mycoplasma synoviae</name>
    <dbReference type="NCBI Taxonomy" id="262723"/>
    <lineage>
        <taxon>Bacteria</taxon>
        <taxon>Bacillati</taxon>
        <taxon>Mycoplasmatota</taxon>
        <taxon>Mycoplasmoidales</taxon>
        <taxon>Metamycoplasmataceae</taxon>
        <taxon>Mycoplasmopsis</taxon>
    </lineage>
</organism>